<comment type="similarity">
    <text evidence="1">Belongs to the UPF0058 family.</text>
</comment>
<name>Y738_ARCFU</name>
<gene>
    <name type="ordered locus">AF_0738</name>
</gene>
<reference key="1">
    <citation type="journal article" date="1997" name="Nature">
        <title>The complete genome sequence of the hyperthermophilic, sulphate-reducing archaeon Archaeoglobus fulgidus.</title>
        <authorList>
            <person name="Klenk H.-P."/>
            <person name="Clayton R.A."/>
            <person name="Tomb J.-F."/>
            <person name="White O."/>
            <person name="Nelson K.E."/>
            <person name="Ketchum K.A."/>
            <person name="Dodson R.J."/>
            <person name="Gwinn M.L."/>
            <person name="Hickey E.K."/>
            <person name="Peterson J.D."/>
            <person name="Richardson D.L."/>
            <person name="Kerlavage A.R."/>
            <person name="Graham D.E."/>
            <person name="Kyrpides N.C."/>
            <person name="Fleischmann R.D."/>
            <person name="Quackenbush J."/>
            <person name="Lee N.H."/>
            <person name="Sutton G.G."/>
            <person name="Gill S.R."/>
            <person name="Kirkness E.F."/>
            <person name="Dougherty B.A."/>
            <person name="McKenney K."/>
            <person name="Adams M.D."/>
            <person name="Loftus B.J."/>
            <person name="Peterson S.N."/>
            <person name="Reich C.I."/>
            <person name="McNeil L.K."/>
            <person name="Badger J.H."/>
            <person name="Glodek A."/>
            <person name="Zhou L."/>
            <person name="Overbeek R."/>
            <person name="Gocayne J.D."/>
            <person name="Weidman J.F."/>
            <person name="McDonald L.A."/>
            <person name="Utterback T.R."/>
            <person name="Cotton M.D."/>
            <person name="Spriggs T."/>
            <person name="Artiach P."/>
            <person name="Kaine B.P."/>
            <person name="Sykes S.M."/>
            <person name="Sadow P.W."/>
            <person name="D'Andrea K.P."/>
            <person name="Bowman C."/>
            <person name="Fujii C."/>
            <person name="Garland S.A."/>
            <person name="Mason T.M."/>
            <person name="Olsen G.J."/>
            <person name="Fraser C.M."/>
            <person name="Smith H.O."/>
            <person name="Woese C.R."/>
            <person name="Venter J.C."/>
        </authorList>
    </citation>
    <scope>NUCLEOTIDE SEQUENCE [LARGE SCALE GENOMIC DNA]</scope>
    <source>
        <strain>ATCC 49558 / DSM 4304 / JCM 9628 / NBRC 100126 / VC-16</strain>
    </source>
</reference>
<keyword id="KW-1185">Reference proteome</keyword>
<proteinExistence type="inferred from homology"/>
<organism>
    <name type="scientific">Archaeoglobus fulgidus (strain ATCC 49558 / DSM 4304 / JCM 9628 / NBRC 100126 / VC-16)</name>
    <dbReference type="NCBI Taxonomy" id="224325"/>
    <lineage>
        <taxon>Archaea</taxon>
        <taxon>Methanobacteriati</taxon>
        <taxon>Methanobacteriota</taxon>
        <taxon>Archaeoglobi</taxon>
        <taxon>Archaeoglobales</taxon>
        <taxon>Archaeoglobaceae</taxon>
        <taxon>Archaeoglobus</taxon>
    </lineage>
</organism>
<accession>O29520</accession>
<protein>
    <recommendedName>
        <fullName>UPF0058 protein AF_0738</fullName>
    </recommendedName>
</protein>
<dbReference type="EMBL" id="AE000782">
    <property type="protein sequence ID" value="AAB90511.1"/>
    <property type="molecule type" value="Genomic_DNA"/>
</dbReference>
<dbReference type="PIR" id="B69342">
    <property type="entry name" value="B69342"/>
</dbReference>
<dbReference type="RefSeq" id="WP_010878241.1">
    <property type="nucleotide sequence ID" value="NC_000917.1"/>
</dbReference>
<dbReference type="SMR" id="O29520"/>
<dbReference type="PaxDb" id="224325-AF_0738"/>
<dbReference type="EnsemblBacteria" id="AAB90511">
    <property type="protein sequence ID" value="AAB90511"/>
    <property type="gene ID" value="AF_0738"/>
</dbReference>
<dbReference type="KEGG" id="afu:AF_0738"/>
<dbReference type="eggNOG" id="arCOG02254">
    <property type="taxonomic scope" value="Archaea"/>
</dbReference>
<dbReference type="HOGENOM" id="CLU_167318_1_0_2"/>
<dbReference type="OrthoDB" id="177623at2157"/>
<dbReference type="PhylomeDB" id="O29520"/>
<dbReference type="Proteomes" id="UP000002199">
    <property type="component" value="Chromosome"/>
</dbReference>
<dbReference type="Gene3D" id="1.20.1270.110">
    <property type="entry name" value="Uncharacterised protein family UPF0058"/>
    <property type="match status" value="1"/>
</dbReference>
<dbReference type="InterPro" id="IPR002753">
    <property type="entry name" value="UPF0058"/>
</dbReference>
<dbReference type="InterPro" id="IPR036519">
    <property type="entry name" value="UPF0058_sf"/>
</dbReference>
<dbReference type="PANTHER" id="PTHR42203">
    <property type="entry name" value="UPF0058 PROTEIN MJ1205"/>
    <property type="match status" value="1"/>
</dbReference>
<dbReference type="PANTHER" id="PTHR42203:SF2">
    <property type="entry name" value="UPF0058 PROTEIN MJ1205"/>
    <property type="match status" value="1"/>
</dbReference>
<dbReference type="Pfam" id="PF01893">
    <property type="entry name" value="UPF0058"/>
    <property type="match status" value="1"/>
</dbReference>
<dbReference type="SUPFAM" id="SSF140371">
    <property type="entry name" value="Vng1086c-like"/>
    <property type="match status" value="1"/>
</dbReference>
<sequence length="93" mass="10664">MHKEEIILLHLTLYNIKKLFENAGIANGHFKAYDELGVQPVHIHKSKTEHKKAISLLCKGISEIFRERSPEDLIESENLKFVIESIAPELCEP</sequence>
<evidence type="ECO:0000305" key="1"/>
<feature type="chain" id="PRO_0000135711" description="UPF0058 protein AF_0738">
    <location>
        <begin position="1"/>
        <end position="93"/>
    </location>
</feature>